<proteinExistence type="inferred from homology"/>
<comment type="subcellular location">
    <subcellularLocation>
        <location evidence="2">Cell outer membrane</location>
    </subcellularLocation>
</comment>
<protein>
    <recommendedName>
        <fullName>Outer membrane protein YaiO</fullName>
    </recommendedName>
</protein>
<sequence>MIKRTLLAAAIFSALPAYAGLTSITAGYDFTDYSGDHGNRNLAYAELVAKVENATLLFNLSQGRRDYETEHFNATRGQGAVWYKWNNWLTTRTGIAFADNTPVFARQDFRQDINLALLPKTLFTTGYRYTKYYDDVEVDAWQGGVSLYTGPVITSYRYTHYDSSDAGGSYSNMISVRLNDPRGTGYTQLWLSRGTGAYTYDWTPETRYGSMKSVSLQRIQPLTEQLNLGLTAGKVWYDTPTDDFNGLQLAARLTWKF</sequence>
<keyword id="KW-0998">Cell outer membrane</keyword>
<keyword id="KW-0472">Membrane</keyword>
<keyword id="KW-1185">Reference proteome</keyword>
<keyword id="KW-0732">Signal</keyword>
<dbReference type="EMBL" id="D85613">
    <property type="protein sequence ID" value="BAA12835.1"/>
    <property type="molecule type" value="Genomic_DNA"/>
</dbReference>
<dbReference type="EMBL" id="U73857">
    <property type="protein sequence ID" value="AAB18083.1"/>
    <property type="molecule type" value="Genomic_DNA"/>
</dbReference>
<dbReference type="EMBL" id="U00096">
    <property type="protein sequence ID" value="AAC73461.1"/>
    <property type="molecule type" value="Genomic_DNA"/>
</dbReference>
<dbReference type="EMBL" id="AP009048">
    <property type="protein sequence ID" value="BAE76140.1"/>
    <property type="molecule type" value="Genomic_DNA"/>
</dbReference>
<dbReference type="PIR" id="F64763">
    <property type="entry name" value="F64763"/>
</dbReference>
<dbReference type="RefSeq" id="NP_414892.1">
    <property type="nucleotide sequence ID" value="NC_000913.3"/>
</dbReference>
<dbReference type="RefSeq" id="WP_000596084.1">
    <property type="nucleotide sequence ID" value="NZ_SSZK01000009.1"/>
</dbReference>
<dbReference type="BioGRID" id="4261805">
    <property type="interactions" value="243"/>
</dbReference>
<dbReference type="FunCoup" id="Q47534">
    <property type="interactions" value="193"/>
</dbReference>
<dbReference type="STRING" id="511145.b0358"/>
<dbReference type="TCDB" id="1.B.95.1.1">
    <property type="family name" value="the outer membrane protein yaio (yaio) family"/>
</dbReference>
<dbReference type="PaxDb" id="511145-b0358"/>
<dbReference type="EnsemblBacteria" id="AAC73461">
    <property type="protein sequence ID" value="AAC73461"/>
    <property type="gene ID" value="b0358"/>
</dbReference>
<dbReference type="GeneID" id="945014"/>
<dbReference type="KEGG" id="ecj:JW0349"/>
<dbReference type="KEGG" id="eco:b0358"/>
<dbReference type="PATRIC" id="fig|1411691.4.peg.1920"/>
<dbReference type="EchoBASE" id="EB3082"/>
<dbReference type="eggNOG" id="ENOG5032SB7">
    <property type="taxonomic scope" value="Bacteria"/>
</dbReference>
<dbReference type="HOGENOM" id="CLU_095634_0_0_6"/>
<dbReference type="InParanoid" id="Q47534"/>
<dbReference type="OMA" id="NWLTTRM"/>
<dbReference type="OrthoDB" id="6570374at2"/>
<dbReference type="BioCyc" id="EcoCyc:G6210-MONOMER"/>
<dbReference type="PRO" id="PR:Q47534"/>
<dbReference type="Proteomes" id="UP000000625">
    <property type="component" value="Chromosome"/>
</dbReference>
<dbReference type="GO" id="GO:0009279">
    <property type="term" value="C:cell outer membrane"/>
    <property type="evidence" value="ECO:0000314"/>
    <property type="project" value="EcoCyc"/>
</dbReference>
<dbReference type="InterPro" id="IPR016504">
    <property type="entry name" value="YaiO"/>
</dbReference>
<dbReference type="InterPro" id="IPR030887">
    <property type="entry name" value="YaiO_beta-barrel_dom"/>
</dbReference>
<dbReference type="NCBIfam" id="TIGR04390">
    <property type="entry name" value="OMP_YaiO_dom"/>
    <property type="match status" value="1"/>
</dbReference>
<dbReference type="Pfam" id="PF19413">
    <property type="entry name" value="YaiO"/>
    <property type="match status" value="1"/>
</dbReference>
<dbReference type="PIRSF" id="PIRSF007027">
    <property type="entry name" value="UCP007027"/>
    <property type="match status" value="1"/>
</dbReference>
<evidence type="ECO:0000255" key="1"/>
<evidence type="ECO:0000269" key="2">
    <source>
    </source>
</evidence>
<feature type="signal peptide" evidence="1">
    <location>
        <begin position="1"/>
        <end position="19"/>
    </location>
</feature>
<feature type="chain" id="PRO_0000168593" description="Outer membrane protein YaiO" evidence="1">
    <location>
        <begin position="20"/>
        <end position="257"/>
    </location>
</feature>
<gene>
    <name type="primary">yaiO</name>
    <name type="ordered locus">b0358</name>
    <name type="ordered locus">JW0349</name>
</gene>
<organism>
    <name type="scientific">Escherichia coli (strain K12)</name>
    <dbReference type="NCBI Taxonomy" id="83333"/>
    <lineage>
        <taxon>Bacteria</taxon>
        <taxon>Pseudomonadati</taxon>
        <taxon>Pseudomonadota</taxon>
        <taxon>Gammaproteobacteria</taxon>
        <taxon>Enterobacterales</taxon>
        <taxon>Enterobacteriaceae</taxon>
        <taxon>Escherichia</taxon>
    </lineage>
</organism>
<reference key="1">
    <citation type="submission" date="1996-05" db="EMBL/GenBank/DDBJ databases">
        <authorList>
            <person name="Nashimoto H."/>
            <person name="Saito N."/>
        </authorList>
    </citation>
    <scope>NUCLEOTIDE SEQUENCE [GENOMIC DNA]</scope>
    <source>
        <strain>K12</strain>
    </source>
</reference>
<reference key="2">
    <citation type="submission" date="1997-01" db="EMBL/GenBank/DDBJ databases">
        <title>Sequence of minutes 4-25 of Escherichia coli.</title>
        <authorList>
            <person name="Chung E."/>
            <person name="Allen E."/>
            <person name="Araujo R."/>
            <person name="Aparicio A.M."/>
            <person name="Davis K."/>
            <person name="Duncan M."/>
            <person name="Federspiel N."/>
            <person name="Hyman R."/>
            <person name="Kalman S."/>
            <person name="Komp C."/>
            <person name="Kurdi O."/>
            <person name="Lew H."/>
            <person name="Lin D."/>
            <person name="Namath A."/>
            <person name="Oefner P."/>
            <person name="Roberts D."/>
            <person name="Schramm S."/>
            <person name="Davis R.W."/>
        </authorList>
    </citation>
    <scope>NUCLEOTIDE SEQUENCE [LARGE SCALE GENOMIC DNA]</scope>
    <source>
        <strain>K12 / MG1655 / ATCC 47076</strain>
    </source>
</reference>
<reference key="3">
    <citation type="journal article" date="1997" name="Science">
        <title>The complete genome sequence of Escherichia coli K-12.</title>
        <authorList>
            <person name="Blattner F.R."/>
            <person name="Plunkett G. III"/>
            <person name="Bloch C.A."/>
            <person name="Perna N.T."/>
            <person name="Burland V."/>
            <person name="Riley M."/>
            <person name="Collado-Vides J."/>
            <person name="Glasner J.D."/>
            <person name="Rode C.K."/>
            <person name="Mayhew G.F."/>
            <person name="Gregor J."/>
            <person name="Davis N.W."/>
            <person name="Kirkpatrick H.A."/>
            <person name="Goeden M.A."/>
            <person name="Rose D.J."/>
            <person name="Mau B."/>
            <person name="Shao Y."/>
        </authorList>
    </citation>
    <scope>NUCLEOTIDE SEQUENCE [LARGE SCALE GENOMIC DNA]</scope>
    <source>
        <strain>K12 / MG1655 / ATCC 47076</strain>
    </source>
</reference>
<reference key="4">
    <citation type="journal article" date="2006" name="Mol. Syst. Biol.">
        <title>Highly accurate genome sequences of Escherichia coli K-12 strains MG1655 and W3110.</title>
        <authorList>
            <person name="Hayashi K."/>
            <person name="Morooka N."/>
            <person name="Yamamoto Y."/>
            <person name="Fujita K."/>
            <person name="Isono K."/>
            <person name="Choi S."/>
            <person name="Ohtsubo E."/>
            <person name="Baba T."/>
            <person name="Wanner B.L."/>
            <person name="Mori H."/>
            <person name="Horiuchi T."/>
        </authorList>
    </citation>
    <scope>NUCLEOTIDE SEQUENCE [LARGE SCALE GENOMIC DNA]</scope>
    <source>
        <strain>K12 / W3110 / ATCC 27325 / DSM 5911</strain>
    </source>
</reference>
<reference key="5">
    <citation type="journal article" date="2006" name="Protein Sci.">
        <title>New Escherichia coli outer membrane proteins identified through prediction and experimental verification.</title>
        <authorList>
            <person name="Marani P."/>
            <person name="Wagner S."/>
            <person name="Baars L."/>
            <person name="Genevaux P."/>
            <person name="de Gier J.W."/>
            <person name="Nilsson I."/>
            <person name="Casadio R."/>
            <person name="von Heijne G."/>
        </authorList>
    </citation>
    <scope>SUBCELLULAR LOCATION</scope>
    <source>
        <strain>K12 / MG1655 / ATCC 47076</strain>
    </source>
</reference>
<accession>Q47534</accession>
<accession>Q2MC66</accession>
<name>YAIO_ECOLI</name>